<gene>
    <name type="primary">thoc7</name>
    <name type="ORF">v1g163685</name>
</gene>
<protein>
    <recommendedName>
        <fullName>THO complex subunit 7 homolog</fullName>
    </recommendedName>
</protein>
<feature type="chain" id="PRO_0000349102" description="THO complex subunit 7 homolog">
    <location>
        <begin position="1"/>
        <end position="205"/>
    </location>
</feature>
<feature type="region of interest" description="Disordered" evidence="3">
    <location>
        <begin position="181"/>
        <end position="205"/>
    </location>
</feature>
<feature type="coiled-coil region" evidence="2">
    <location>
        <begin position="68"/>
        <end position="158"/>
    </location>
</feature>
<organism>
    <name type="scientific">Nematostella vectensis</name>
    <name type="common">Starlet sea anemone</name>
    <dbReference type="NCBI Taxonomy" id="45351"/>
    <lineage>
        <taxon>Eukaryota</taxon>
        <taxon>Metazoa</taxon>
        <taxon>Cnidaria</taxon>
        <taxon>Anthozoa</taxon>
        <taxon>Hexacorallia</taxon>
        <taxon>Actiniaria</taxon>
        <taxon>Edwardsiidae</taxon>
        <taxon>Nematostella</taxon>
    </lineage>
</organism>
<evidence type="ECO:0000250" key="1">
    <source>
        <dbReference type="UniProtKB" id="Q6I9Y2"/>
    </source>
</evidence>
<evidence type="ECO:0000255" key="2"/>
<evidence type="ECO:0000256" key="3">
    <source>
        <dbReference type="SAM" id="MobiDB-lite"/>
    </source>
</evidence>
<evidence type="ECO:0000305" key="4"/>
<sequence>MADDEVIRKRLLIDGEGVGDDRRITTLMKTFVKWCNSTDDDNDASYQKLLAQLAQCEFAMGKTEMVHAMNERETENYEKAYKEVEQSITHAYEEIATCKTNLQEAKRIRRNKQEYDALAKEITKHPERQETTRQISELEKDLNSLTETKESLVSKLELRKKQFYLLINTIHELQRMIDDEKTDEGTALSPQQSITSPGKVALMDT</sequence>
<name>THOC7_NEMVE</name>
<reference key="1">
    <citation type="journal article" date="2007" name="Science">
        <title>Sea anemone genome reveals ancestral eumetazoan gene repertoire and genomic organization.</title>
        <authorList>
            <person name="Putnam N.H."/>
            <person name="Srivastava M."/>
            <person name="Hellsten U."/>
            <person name="Dirks B."/>
            <person name="Chapman J."/>
            <person name="Salamov A."/>
            <person name="Terry A."/>
            <person name="Shapiro H."/>
            <person name="Lindquist E."/>
            <person name="Kapitonov V.V."/>
            <person name="Jurka J."/>
            <person name="Genikhovich G."/>
            <person name="Grigoriev I.V."/>
            <person name="Lucas S.M."/>
            <person name="Steele R.E."/>
            <person name="Finnerty J.R."/>
            <person name="Technau U."/>
            <person name="Martindale M.Q."/>
            <person name="Rokhsar D.S."/>
        </authorList>
    </citation>
    <scope>NUCLEOTIDE SEQUENCE [LARGE SCALE GENOMIC DNA]</scope>
    <source>
        <strain>CH2 X CH6</strain>
    </source>
</reference>
<comment type="function">
    <text evidence="1">May act as component of the THO subcomplex of the TREX complex which is thought to couple mRNA transcription, processing and nuclear export, and which specifically associates with spliced mRNA and not with unspliced pre-mRNA.</text>
</comment>
<comment type="subunit">
    <text evidence="1">Component of the THO subcomplex of the transcription/export (TREX) complex which seems to have a dynamic structure involving ATP-dependent remodeling.</text>
</comment>
<comment type="subcellular location">
    <subcellularLocation>
        <location evidence="1">Cytoplasm</location>
    </subcellularLocation>
    <subcellularLocation>
        <location evidence="1">Nucleus</location>
    </subcellularLocation>
    <subcellularLocation>
        <location evidence="1">Nucleus speckle</location>
    </subcellularLocation>
</comment>
<comment type="similarity">
    <text evidence="4">Belongs to the THOC7 family.</text>
</comment>
<dbReference type="EMBL" id="DS469549">
    <property type="protein sequence ID" value="EDO43898.1"/>
    <property type="molecule type" value="Genomic_DNA"/>
</dbReference>
<dbReference type="SMR" id="A7RX34"/>
<dbReference type="STRING" id="45351.A7RX34"/>
<dbReference type="EnsemblMetazoa" id="EDO43898">
    <property type="protein sequence ID" value="EDO43898"/>
    <property type="gene ID" value="NEMVEDRAFT_v1g163685"/>
</dbReference>
<dbReference type="GeneID" id="5515860"/>
<dbReference type="KEGG" id="nve:5515860"/>
<dbReference type="eggNOG" id="KOG3215">
    <property type="taxonomic scope" value="Eukaryota"/>
</dbReference>
<dbReference type="HOGENOM" id="CLU_087727_0_0_1"/>
<dbReference type="InParanoid" id="A7RX34"/>
<dbReference type="OMA" id="WANSKND"/>
<dbReference type="OrthoDB" id="205166at2759"/>
<dbReference type="PhylomeDB" id="A7RX34"/>
<dbReference type="Proteomes" id="UP000001593">
    <property type="component" value="Unassembled WGS sequence"/>
</dbReference>
<dbReference type="GO" id="GO:0005737">
    <property type="term" value="C:cytoplasm"/>
    <property type="evidence" value="ECO:0007669"/>
    <property type="project" value="UniProtKB-SubCell"/>
</dbReference>
<dbReference type="GO" id="GO:0016607">
    <property type="term" value="C:nuclear speck"/>
    <property type="evidence" value="ECO:0007669"/>
    <property type="project" value="UniProtKB-SubCell"/>
</dbReference>
<dbReference type="GO" id="GO:0000445">
    <property type="term" value="C:THO complex part of transcription export complex"/>
    <property type="evidence" value="ECO:0000318"/>
    <property type="project" value="GO_Central"/>
</dbReference>
<dbReference type="GO" id="GO:0006406">
    <property type="term" value="P:mRNA export from nucleus"/>
    <property type="evidence" value="ECO:0000318"/>
    <property type="project" value="GO_Central"/>
</dbReference>
<dbReference type="GO" id="GO:0006397">
    <property type="term" value="P:mRNA processing"/>
    <property type="evidence" value="ECO:0007669"/>
    <property type="project" value="InterPro"/>
</dbReference>
<dbReference type="InterPro" id="IPR008501">
    <property type="entry name" value="THOC7/Mft1"/>
</dbReference>
<dbReference type="PANTHER" id="PTHR23405">
    <property type="entry name" value="MAINTENANCE OF KILLER 16 MAK16 PROTEIN-RELATED"/>
    <property type="match status" value="1"/>
</dbReference>
<dbReference type="PANTHER" id="PTHR23405:SF5">
    <property type="entry name" value="THO COMPLEX SUBUNIT 7 HOMOLOG"/>
    <property type="match status" value="1"/>
</dbReference>
<dbReference type="Pfam" id="PF05615">
    <property type="entry name" value="THOC7"/>
    <property type="match status" value="1"/>
</dbReference>
<accession>A7RX34</accession>
<proteinExistence type="inferred from homology"/>
<keyword id="KW-0175">Coiled coil</keyword>
<keyword id="KW-0963">Cytoplasm</keyword>
<keyword id="KW-0539">Nucleus</keyword>
<keyword id="KW-1185">Reference proteome</keyword>